<dbReference type="EMBL" id="CM002237">
    <property type="protein sequence ID" value="EAA26636.1"/>
    <property type="molecule type" value="Genomic_DNA"/>
</dbReference>
<dbReference type="PIR" id="T52357">
    <property type="entry name" value="T52357"/>
</dbReference>
<dbReference type="RefSeq" id="XP_955872.1">
    <property type="nucleotide sequence ID" value="XM_950779.2"/>
</dbReference>
<dbReference type="PDB" id="6YWE">
    <property type="method" value="EM"/>
    <property type="resolution" value="2.99 A"/>
    <property type="chains" value="W=1-129"/>
</dbReference>
<dbReference type="PDB" id="6YWS">
    <property type="method" value="EM"/>
    <property type="resolution" value="2.74 A"/>
    <property type="chains" value="W=1-129"/>
</dbReference>
<dbReference type="PDB" id="6YWV">
    <property type="method" value="EM"/>
    <property type="resolution" value="3.03 A"/>
    <property type="chains" value="W=1-129"/>
</dbReference>
<dbReference type="PDB" id="6YWX">
    <property type="method" value="EM"/>
    <property type="resolution" value="3.10 A"/>
    <property type="chains" value="W=1-129"/>
</dbReference>
<dbReference type="PDBsum" id="6YWE"/>
<dbReference type="PDBsum" id="6YWS"/>
<dbReference type="PDBsum" id="6YWV"/>
<dbReference type="PDBsum" id="6YWX"/>
<dbReference type="EMDB" id="EMD-10965"/>
<dbReference type="EMDB" id="EMD-10973"/>
<dbReference type="EMDB" id="EMD-10977"/>
<dbReference type="EMDB" id="EMD-10978"/>
<dbReference type="SMR" id="Q1K4P1"/>
<dbReference type="STRING" id="367110.Q1K4P1"/>
<dbReference type="PaxDb" id="5141-EFNCRP00000002643"/>
<dbReference type="EnsemblFungi" id="EAA26636">
    <property type="protein sequence ID" value="EAA26636"/>
    <property type="gene ID" value="NCU03516"/>
</dbReference>
<dbReference type="GeneID" id="3872019"/>
<dbReference type="KEGG" id="ncr:NCU03516"/>
<dbReference type="VEuPathDB" id="FungiDB:NCU03516"/>
<dbReference type="HOGENOM" id="CLU_129084_0_2_1"/>
<dbReference type="InParanoid" id="Q1K4P1"/>
<dbReference type="OMA" id="THLNRCP"/>
<dbReference type="OrthoDB" id="2014905at2759"/>
<dbReference type="Proteomes" id="UP000001805">
    <property type="component" value="Chromosome 6, Linkage Group II"/>
</dbReference>
<dbReference type="GO" id="GO:0005762">
    <property type="term" value="C:mitochondrial large ribosomal subunit"/>
    <property type="evidence" value="ECO:0000318"/>
    <property type="project" value="GO_Central"/>
</dbReference>
<dbReference type="GO" id="GO:0046872">
    <property type="term" value="F:metal ion binding"/>
    <property type="evidence" value="ECO:0007669"/>
    <property type="project" value="UniProtKB-KW"/>
</dbReference>
<dbReference type="GO" id="GO:0003735">
    <property type="term" value="F:structural constituent of ribosome"/>
    <property type="evidence" value="ECO:0000318"/>
    <property type="project" value="GO_Central"/>
</dbReference>
<dbReference type="GO" id="GO:0006412">
    <property type="term" value="P:translation"/>
    <property type="evidence" value="ECO:0007669"/>
    <property type="project" value="InterPro"/>
</dbReference>
<dbReference type="InterPro" id="IPR051991">
    <property type="entry name" value="Mitoribosomal_protein_bL32"/>
</dbReference>
<dbReference type="InterPro" id="IPR002677">
    <property type="entry name" value="Ribosomal_bL32"/>
</dbReference>
<dbReference type="InterPro" id="IPR011332">
    <property type="entry name" value="Ribosomal_zn-bd"/>
</dbReference>
<dbReference type="NCBIfam" id="TIGR01031">
    <property type="entry name" value="rpmF_bact"/>
    <property type="match status" value="1"/>
</dbReference>
<dbReference type="PANTHER" id="PTHR21026">
    <property type="entry name" value="39S RIBOSOMAL PROTEIN L32, MITOCHONDRIAL"/>
    <property type="match status" value="1"/>
</dbReference>
<dbReference type="PANTHER" id="PTHR21026:SF2">
    <property type="entry name" value="LARGE RIBOSOMAL SUBUNIT PROTEIN BL32M"/>
    <property type="match status" value="1"/>
</dbReference>
<dbReference type="Pfam" id="PF01783">
    <property type="entry name" value="Ribosomal_L32p"/>
    <property type="match status" value="1"/>
</dbReference>
<dbReference type="SUPFAM" id="SSF57829">
    <property type="entry name" value="Zn-binding ribosomal proteins"/>
    <property type="match status" value="1"/>
</dbReference>
<comment type="function">
    <text evidence="5">Component of the mitochondrial ribosome (mitoribosome), a dedicated translation machinery responsible for the synthesis of mitochondrial genome-encoded proteins, including at least some of the essential transmembrane subunits of the mitochondrial respiratory chain. The mitoribosomes are attached to the mitochondrial inner membrane and translation products are cotranslationally integrated into the membrane.</text>
</comment>
<comment type="subunit">
    <text evidence="2">Component of the mitochondrial large ribosomal subunit (mt-LSU). Mature N.crassa 74S mitochondrial ribosomes consist of a small (37S) and a large (54S) subunit. The 37S small subunit contains a 16S ribosomal RNA (16S mt-rRNA) and 32 different proteins. The 54S large subunit contains a 23S rRNA (23S mt-rRNA) and 42 different proteins. bL32m has a zinc binding site.</text>
</comment>
<comment type="subcellular location">
    <subcellularLocation>
        <location evidence="2">Mitochondrion</location>
    </subcellularLocation>
</comment>
<comment type="PTM">
    <text evidence="1">MRPL32 precursor is processed by the m-AAA protease (composed of YTA12/RCA1 and YTA10/AFG3), which cleaves the N-terminal transit peptide. Cleavage by the m-AAA protease takes place prior to assembly into the large subunit, an essential step for mitochondrial ribosome (mitoribosome) assembly (By similarity). Proper processing by the m-AAA protease is dependent on the zinc-binding region within the tightly folded C-terminal domain of MRPL32: zinc-dependent folding halts degradation initiated from the N-terminus and triggers the release of mature MRPL32 (By similarity).</text>
</comment>
<comment type="similarity">
    <text evidence="4">Belongs to the bacterial ribosomal protein bL32 family.</text>
</comment>
<accession>Q1K4P1</accession>
<name>RM32_NEUCR</name>
<reference key="1">
    <citation type="journal article" date="2003" name="Nature">
        <title>The genome sequence of the filamentous fungus Neurospora crassa.</title>
        <authorList>
            <person name="Galagan J.E."/>
            <person name="Calvo S.E."/>
            <person name="Borkovich K.A."/>
            <person name="Selker E.U."/>
            <person name="Read N.D."/>
            <person name="Jaffe D.B."/>
            <person name="FitzHugh W."/>
            <person name="Ma L.-J."/>
            <person name="Smirnov S."/>
            <person name="Purcell S."/>
            <person name="Rehman B."/>
            <person name="Elkins T."/>
            <person name="Engels R."/>
            <person name="Wang S."/>
            <person name="Nielsen C.B."/>
            <person name="Butler J."/>
            <person name="Endrizzi M."/>
            <person name="Qui D."/>
            <person name="Ianakiev P."/>
            <person name="Bell-Pedersen D."/>
            <person name="Nelson M.A."/>
            <person name="Werner-Washburne M."/>
            <person name="Selitrennikoff C.P."/>
            <person name="Kinsey J.A."/>
            <person name="Braun E.L."/>
            <person name="Zelter A."/>
            <person name="Schulte U."/>
            <person name="Kothe G.O."/>
            <person name="Jedd G."/>
            <person name="Mewes H.-W."/>
            <person name="Staben C."/>
            <person name="Marcotte E."/>
            <person name="Greenberg D."/>
            <person name="Roy A."/>
            <person name="Foley K."/>
            <person name="Naylor J."/>
            <person name="Stange-Thomann N."/>
            <person name="Barrett R."/>
            <person name="Gnerre S."/>
            <person name="Kamal M."/>
            <person name="Kamvysselis M."/>
            <person name="Mauceli E.W."/>
            <person name="Bielke C."/>
            <person name="Rudd S."/>
            <person name="Frishman D."/>
            <person name="Krystofova S."/>
            <person name="Rasmussen C."/>
            <person name="Metzenberg R.L."/>
            <person name="Perkins D.D."/>
            <person name="Kroken S."/>
            <person name="Cogoni C."/>
            <person name="Macino G."/>
            <person name="Catcheside D.E.A."/>
            <person name="Li W."/>
            <person name="Pratt R.J."/>
            <person name="Osmani S.A."/>
            <person name="DeSouza C.P.C."/>
            <person name="Glass N.L."/>
            <person name="Orbach M.J."/>
            <person name="Berglund J.A."/>
            <person name="Voelker R."/>
            <person name="Yarden O."/>
            <person name="Plamann M."/>
            <person name="Seiler S."/>
            <person name="Dunlap J.C."/>
            <person name="Radford A."/>
            <person name="Aramayo R."/>
            <person name="Natvig D.O."/>
            <person name="Alex L.A."/>
            <person name="Mannhaupt G."/>
            <person name="Ebbole D.J."/>
            <person name="Freitag M."/>
            <person name="Paulsen I."/>
            <person name="Sachs M.S."/>
            <person name="Lander E.S."/>
            <person name="Nusbaum C."/>
            <person name="Birren B.W."/>
        </authorList>
    </citation>
    <scope>NUCLEOTIDE SEQUENCE [LARGE SCALE GENOMIC DNA]</scope>
    <source>
        <strain>ATCC 24698 / 74-OR23-1A / CBS 708.71 / DSM 1257 / FGSC 987</strain>
    </source>
</reference>
<reference evidence="6 7" key="2">
    <citation type="journal article" date="2020" name="Nat. Commun.">
        <title>Analysis of translating mitoribosome reveals functional characteristics of translation in mitochondria of fungi.</title>
        <authorList>
            <person name="Itoh Y."/>
            <person name="Naschberger A."/>
            <person name="Mortezaei N."/>
            <person name="Herrmann J.M."/>
            <person name="Amunts A."/>
        </authorList>
    </citation>
    <scope>STRUCTURE BY ELECTRON MICROSCOPY (2.74 ANGSTROMS)</scope>
</reference>
<protein>
    <recommendedName>
        <fullName evidence="3">Large ribosomal subunit protein bL32m</fullName>
    </recommendedName>
</protein>
<keyword id="KW-0002">3D-structure</keyword>
<keyword id="KW-0479">Metal-binding</keyword>
<keyword id="KW-0496">Mitochondrion</keyword>
<keyword id="KW-1185">Reference proteome</keyword>
<keyword id="KW-0687">Ribonucleoprotein</keyword>
<keyword id="KW-0689">Ribosomal protein</keyword>
<keyword id="KW-0809">Transit peptide</keyword>
<keyword id="KW-0862">Zinc</keyword>
<sequence>MAAMTAAAAAPAMRLFNPSTFFQTLRTQRFGVPALNFAVPAAAISLLPSIPSLLEDIWEGILRAVPKKKTSHMKKRHRQMAGKALKDVTHLNRCPACGNLKRMHHLCSTCLGKLKGFMDRNGGSNAKAY</sequence>
<feature type="transit peptide" description="Mitochondrion" evidence="1">
    <location>
        <begin position="1"/>
        <end position="63"/>
    </location>
</feature>
<feature type="chain" id="PRO_0000458624" description="Large ribosomal subunit protein bL32m">
    <location>
        <begin position="64"/>
        <end position="129"/>
    </location>
</feature>
<feature type="binding site" evidence="1">
    <location>
        <position position="94"/>
    </location>
    <ligand>
        <name>Zn(2+)</name>
        <dbReference type="ChEBI" id="CHEBI:29105"/>
    </ligand>
</feature>
<feature type="binding site" evidence="1">
    <location>
        <position position="97"/>
    </location>
    <ligand>
        <name>Zn(2+)</name>
        <dbReference type="ChEBI" id="CHEBI:29105"/>
    </ligand>
</feature>
<feature type="binding site" evidence="1">
    <location>
        <position position="107"/>
    </location>
    <ligand>
        <name>Zn(2+)</name>
        <dbReference type="ChEBI" id="CHEBI:29105"/>
    </ligand>
</feature>
<feature type="binding site" evidence="1">
    <location>
        <position position="110"/>
    </location>
    <ligand>
        <name>Zn(2+)</name>
        <dbReference type="ChEBI" id="CHEBI:29105"/>
    </ligand>
</feature>
<proteinExistence type="evidence at protein level"/>
<organism>
    <name type="scientific">Neurospora crassa (strain ATCC 24698 / 74-OR23-1A / CBS 708.71 / DSM 1257 / FGSC 987)</name>
    <dbReference type="NCBI Taxonomy" id="367110"/>
    <lineage>
        <taxon>Eukaryota</taxon>
        <taxon>Fungi</taxon>
        <taxon>Dikarya</taxon>
        <taxon>Ascomycota</taxon>
        <taxon>Pezizomycotina</taxon>
        <taxon>Sordariomycetes</taxon>
        <taxon>Sordariomycetidae</taxon>
        <taxon>Sordariales</taxon>
        <taxon>Sordariaceae</taxon>
        <taxon>Neurospora</taxon>
    </lineage>
</organism>
<evidence type="ECO:0000250" key="1">
    <source>
        <dbReference type="UniProtKB" id="P25348"/>
    </source>
</evidence>
<evidence type="ECO:0000269" key="2">
    <source>
    </source>
</evidence>
<evidence type="ECO:0000303" key="3">
    <source>
    </source>
</evidence>
<evidence type="ECO:0000305" key="4"/>
<evidence type="ECO:0000305" key="5">
    <source>
    </source>
</evidence>
<evidence type="ECO:0007744" key="6">
    <source>
        <dbReference type="PDB" id="6YWS"/>
    </source>
</evidence>
<evidence type="ECO:0007744" key="7">
    <source>
        <dbReference type="PDB" id="6YWV"/>
    </source>
</evidence>
<gene>
    <name type="primary">mrpl32</name>
    <name type="ORF">NCU03516</name>
</gene>